<evidence type="ECO:0000250" key="1"/>
<evidence type="ECO:0000250" key="2">
    <source>
        <dbReference type="UniProtKB" id="P13009"/>
    </source>
</evidence>
<evidence type="ECO:0000255" key="3">
    <source>
        <dbReference type="PROSITE-ProRule" id="PRU00333"/>
    </source>
</evidence>
<evidence type="ECO:0000255" key="4">
    <source>
        <dbReference type="PROSITE-ProRule" id="PRU00334"/>
    </source>
</evidence>
<evidence type="ECO:0000255" key="5">
    <source>
        <dbReference type="PROSITE-ProRule" id="PRU00346"/>
    </source>
</evidence>
<evidence type="ECO:0000255" key="6">
    <source>
        <dbReference type="PROSITE-ProRule" id="PRU00666"/>
    </source>
</evidence>
<evidence type="ECO:0000255" key="7">
    <source>
        <dbReference type="PROSITE-ProRule" id="PRU00667"/>
    </source>
</evidence>
<evidence type="ECO:0000256" key="8">
    <source>
        <dbReference type="SAM" id="MobiDB-lite"/>
    </source>
</evidence>
<evidence type="ECO:0000305" key="9"/>
<keyword id="KW-0028">Amino-acid biosynthesis</keyword>
<keyword id="KW-0846">Cobalamin</keyword>
<keyword id="KW-0170">Cobalt</keyword>
<keyword id="KW-0479">Metal-binding</keyword>
<keyword id="KW-0486">Methionine biosynthesis</keyword>
<keyword id="KW-0489">Methyltransferase</keyword>
<keyword id="KW-1185">Reference proteome</keyword>
<keyword id="KW-0677">Repeat</keyword>
<keyword id="KW-0949">S-adenosyl-L-methionine</keyword>
<keyword id="KW-0808">Transferase</keyword>
<keyword id="KW-0862">Zinc</keyword>
<organism>
    <name type="scientific">Mycobacterium tuberculosis (strain ATCC 25618 / H37Rv)</name>
    <dbReference type="NCBI Taxonomy" id="83332"/>
    <lineage>
        <taxon>Bacteria</taxon>
        <taxon>Bacillati</taxon>
        <taxon>Actinomycetota</taxon>
        <taxon>Actinomycetes</taxon>
        <taxon>Mycobacteriales</taxon>
        <taxon>Mycobacteriaceae</taxon>
        <taxon>Mycobacterium</taxon>
        <taxon>Mycobacterium tuberculosis complex</taxon>
    </lineage>
</organism>
<dbReference type="EC" id="2.1.1.13"/>
<dbReference type="EMBL" id="AL123456">
    <property type="protein sequence ID" value="CCP44899.1"/>
    <property type="molecule type" value="Genomic_DNA"/>
</dbReference>
<dbReference type="PIR" id="G70513">
    <property type="entry name" value="G70513"/>
</dbReference>
<dbReference type="RefSeq" id="NP_216640.1">
    <property type="nucleotide sequence ID" value="NC_000962.3"/>
</dbReference>
<dbReference type="RefSeq" id="WP_003900472.1">
    <property type="nucleotide sequence ID" value="NZ_NVQJ01000058.1"/>
</dbReference>
<dbReference type="SMR" id="O33259"/>
<dbReference type="FunCoup" id="O33259">
    <property type="interactions" value="240"/>
</dbReference>
<dbReference type="STRING" id="83332.Rv2124c"/>
<dbReference type="PaxDb" id="83332-Rv2124c"/>
<dbReference type="GeneID" id="45426099"/>
<dbReference type="GeneID" id="888711"/>
<dbReference type="KEGG" id="mtu:Rv2124c"/>
<dbReference type="KEGG" id="mtv:RVBD_2124c"/>
<dbReference type="TubercuList" id="Rv2124c"/>
<dbReference type="eggNOG" id="COG0646">
    <property type="taxonomic scope" value="Bacteria"/>
</dbReference>
<dbReference type="eggNOG" id="COG1410">
    <property type="taxonomic scope" value="Bacteria"/>
</dbReference>
<dbReference type="InParanoid" id="O33259"/>
<dbReference type="OrthoDB" id="9803687at2"/>
<dbReference type="PhylomeDB" id="O33259"/>
<dbReference type="UniPathway" id="UPA00051">
    <property type="reaction ID" value="UER00081"/>
</dbReference>
<dbReference type="Proteomes" id="UP000001584">
    <property type="component" value="Chromosome"/>
</dbReference>
<dbReference type="GO" id="GO:0005829">
    <property type="term" value="C:cytosol"/>
    <property type="evidence" value="ECO:0007005"/>
    <property type="project" value="MTBBASE"/>
</dbReference>
<dbReference type="GO" id="GO:0009274">
    <property type="term" value="C:peptidoglycan-based cell wall"/>
    <property type="evidence" value="ECO:0007005"/>
    <property type="project" value="MTBBASE"/>
</dbReference>
<dbReference type="GO" id="GO:0005886">
    <property type="term" value="C:plasma membrane"/>
    <property type="evidence" value="ECO:0007005"/>
    <property type="project" value="MTBBASE"/>
</dbReference>
<dbReference type="GO" id="GO:0031419">
    <property type="term" value="F:cobalamin binding"/>
    <property type="evidence" value="ECO:0007669"/>
    <property type="project" value="UniProtKB-KW"/>
</dbReference>
<dbReference type="GO" id="GO:0008705">
    <property type="term" value="F:methionine synthase activity"/>
    <property type="evidence" value="ECO:0000318"/>
    <property type="project" value="GO_Central"/>
</dbReference>
<dbReference type="GO" id="GO:0008270">
    <property type="term" value="F:zinc ion binding"/>
    <property type="evidence" value="ECO:0007669"/>
    <property type="project" value="InterPro"/>
</dbReference>
<dbReference type="GO" id="GO:0050667">
    <property type="term" value="P:homocysteine metabolic process"/>
    <property type="evidence" value="ECO:0000318"/>
    <property type="project" value="GO_Central"/>
</dbReference>
<dbReference type="GO" id="GO:0009086">
    <property type="term" value="P:methionine biosynthetic process"/>
    <property type="evidence" value="ECO:0000318"/>
    <property type="project" value="GO_Central"/>
</dbReference>
<dbReference type="GO" id="GO:0032259">
    <property type="term" value="P:methylation"/>
    <property type="evidence" value="ECO:0007669"/>
    <property type="project" value="UniProtKB-KW"/>
</dbReference>
<dbReference type="GO" id="GO:0046653">
    <property type="term" value="P:tetrahydrofolate metabolic process"/>
    <property type="evidence" value="ECO:0000318"/>
    <property type="project" value="GO_Central"/>
</dbReference>
<dbReference type="CDD" id="cd02069">
    <property type="entry name" value="methionine_synthase_B12_BD"/>
    <property type="match status" value="1"/>
</dbReference>
<dbReference type="CDD" id="cd00740">
    <property type="entry name" value="MeTr"/>
    <property type="match status" value="1"/>
</dbReference>
<dbReference type="FunFam" id="1.10.1240.10:FF:000002">
    <property type="entry name" value="Methionine synthase"/>
    <property type="match status" value="1"/>
</dbReference>
<dbReference type="FunFam" id="3.20.20.20:FF:000007">
    <property type="entry name" value="Methionine synthase"/>
    <property type="match status" value="1"/>
</dbReference>
<dbReference type="FunFam" id="3.20.20.330:FF:000006">
    <property type="entry name" value="Methionine synthase"/>
    <property type="match status" value="1"/>
</dbReference>
<dbReference type="FunFam" id="3.40.50.280:FF:000004">
    <property type="entry name" value="Methionine synthase"/>
    <property type="match status" value="1"/>
</dbReference>
<dbReference type="Gene3D" id="3.40.50.280">
    <property type="entry name" value="Cobalamin-binding domain"/>
    <property type="match status" value="1"/>
</dbReference>
<dbReference type="Gene3D" id="3.20.20.20">
    <property type="entry name" value="Dihydropteroate synthase-like"/>
    <property type="match status" value="1"/>
</dbReference>
<dbReference type="Gene3D" id="3.20.20.330">
    <property type="entry name" value="Homocysteine-binding-like domain"/>
    <property type="match status" value="1"/>
</dbReference>
<dbReference type="Gene3D" id="1.10.1240.10">
    <property type="entry name" value="Methionine synthase domain"/>
    <property type="match status" value="1"/>
</dbReference>
<dbReference type="Gene3D" id="3.10.196.10">
    <property type="entry name" value="Vitamin B12-dependent methionine synthase, activation domain"/>
    <property type="match status" value="1"/>
</dbReference>
<dbReference type="InterPro" id="IPR003759">
    <property type="entry name" value="Cbl-bd_cap"/>
</dbReference>
<dbReference type="InterPro" id="IPR006158">
    <property type="entry name" value="Cobalamin-bd"/>
</dbReference>
<dbReference type="InterPro" id="IPR036724">
    <property type="entry name" value="Cobalamin-bd_sf"/>
</dbReference>
<dbReference type="InterPro" id="IPR011005">
    <property type="entry name" value="Dihydropteroate_synth-like_sf"/>
</dbReference>
<dbReference type="InterPro" id="IPR003726">
    <property type="entry name" value="HCY_dom"/>
</dbReference>
<dbReference type="InterPro" id="IPR036589">
    <property type="entry name" value="HCY_dom_sf"/>
</dbReference>
<dbReference type="InterPro" id="IPR050554">
    <property type="entry name" value="Met_Synthase/Corrinoid"/>
</dbReference>
<dbReference type="InterPro" id="IPR033706">
    <property type="entry name" value="Met_synthase_B12-bd"/>
</dbReference>
<dbReference type="InterPro" id="IPR011822">
    <property type="entry name" value="MetH"/>
</dbReference>
<dbReference type="InterPro" id="IPR036594">
    <property type="entry name" value="Meth_synthase_dom"/>
</dbReference>
<dbReference type="InterPro" id="IPR000489">
    <property type="entry name" value="Pterin-binding_dom"/>
</dbReference>
<dbReference type="InterPro" id="IPR004223">
    <property type="entry name" value="VitB12-dep_Met_synth_activ_dom"/>
</dbReference>
<dbReference type="InterPro" id="IPR037010">
    <property type="entry name" value="VitB12-dep_Met_synth_activ_sf"/>
</dbReference>
<dbReference type="NCBIfam" id="TIGR02082">
    <property type="entry name" value="metH"/>
    <property type="match status" value="1"/>
</dbReference>
<dbReference type="PANTHER" id="PTHR45833">
    <property type="entry name" value="METHIONINE SYNTHASE"/>
    <property type="match status" value="1"/>
</dbReference>
<dbReference type="PANTHER" id="PTHR45833:SF1">
    <property type="entry name" value="METHIONINE SYNTHASE"/>
    <property type="match status" value="1"/>
</dbReference>
<dbReference type="Pfam" id="PF02310">
    <property type="entry name" value="B12-binding"/>
    <property type="match status" value="1"/>
</dbReference>
<dbReference type="Pfam" id="PF02607">
    <property type="entry name" value="B12-binding_2"/>
    <property type="match status" value="1"/>
</dbReference>
<dbReference type="Pfam" id="PF02965">
    <property type="entry name" value="Met_synt_B12"/>
    <property type="match status" value="1"/>
</dbReference>
<dbReference type="Pfam" id="PF00809">
    <property type="entry name" value="Pterin_bind"/>
    <property type="match status" value="1"/>
</dbReference>
<dbReference type="Pfam" id="PF02574">
    <property type="entry name" value="S-methyl_trans"/>
    <property type="match status" value="1"/>
</dbReference>
<dbReference type="PIRSF" id="PIRSF000381">
    <property type="entry name" value="MetH"/>
    <property type="match status" value="1"/>
</dbReference>
<dbReference type="SMART" id="SM01018">
    <property type="entry name" value="B12-binding_2"/>
    <property type="match status" value="1"/>
</dbReference>
<dbReference type="SUPFAM" id="SSF52242">
    <property type="entry name" value="Cobalamin (vitamin B12)-binding domain"/>
    <property type="match status" value="1"/>
</dbReference>
<dbReference type="SUPFAM" id="SSF51717">
    <property type="entry name" value="Dihydropteroate synthetase-like"/>
    <property type="match status" value="1"/>
</dbReference>
<dbReference type="SUPFAM" id="SSF82282">
    <property type="entry name" value="Homocysteine S-methyltransferase"/>
    <property type="match status" value="1"/>
</dbReference>
<dbReference type="SUPFAM" id="SSF56507">
    <property type="entry name" value="Methionine synthase activation domain-like"/>
    <property type="match status" value="1"/>
</dbReference>
<dbReference type="SUPFAM" id="SSF47644">
    <property type="entry name" value="Methionine synthase domain"/>
    <property type="match status" value="1"/>
</dbReference>
<dbReference type="PROSITE" id="PS50974">
    <property type="entry name" value="ADOMET_ACTIVATION"/>
    <property type="match status" value="1"/>
</dbReference>
<dbReference type="PROSITE" id="PS51332">
    <property type="entry name" value="B12_BINDING"/>
    <property type="match status" value="1"/>
</dbReference>
<dbReference type="PROSITE" id="PS51337">
    <property type="entry name" value="B12_BINDING_NTER"/>
    <property type="match status" value="1"/>
</dbReference>
<dbReference type="PROSITE" id="PS50970">
    <property type="entry name" value="HCY"/>
    <property type="match status" value="1"/>
</dbReference>
<dbReference type="PROSITE" id="PS50972">
    <property type="entry name" value="PTERIN_BINDING"/>
    <property type="match status" value="1"/>
</dbReference>
<sequence>MTAADKHLYDTDLLDVLSQRVMVGDGAMGTQLQAADLTLDDFRGLEGCNEILNETRPDVLETIHRNYFEAGADAVETNTFGCNLSNLGDYDIADRIRDLSQKGTAIARRVADELGSPDRKRYVLGSMGPGTKLPTLGHTEYAVIRDAYTEAALGMLDGGADAILVETCQDLLQLKAAVLGSRRAMTRAGRHIPVFAHVTVETTGTMLLGSEIGAALTAVEPLGVDMIGLNCATGPAEMSEHLRHLSRHARIPVSVMPNAGLPVLGAKGAEYPLLPDELAEALAGFIAEFGLSLVGGCCGTTPAHIREVAAAVANIKRPERQVSYEPSVSSLYTAIPFAQDASVLVIGERTNANGSKGFREAMIAEDYQKCLDIAKDQTRDGAHLLDLCVDYVGRDGVADMKALASRLATSSTLPIMLDSTETAVLQAGLEHLGGRCAINSVNYEDGDGPESRFAKTMALVAEHGAAVVALTIDEEGQARTAQKKVEIAERLINDITGNWGVDESSILIDTLTFTIATGQEESRRDGIETIEAIRELKKRHPDVQTTLGLSNISFGLNPAARQVLNSVFLHECQEAGLDSAIVHASKILPMNRIPEEQRNVALDLVYDRRREDYDPLQELMRLFEGVSAASSKEDRLAELAGLPLFERLAQRIVDGERNGLDADLDEAMTQKPPLQIINEHLLAGMKTVGELFGSGQMQLPFVLQSAEVMKAAVAYLEPHMERSDDDSGKGRIVLATVKGDVHDIGKNLVDIILSNNGYEVVNIGIKQPIATILEVAEDKSADVVGMSGLLVKSTVVMKENLEEMNTRGVAEKFPVLLGGAALTRSYVENDLAEIYQGEVHYARDAFEGLKLMDTIMSAKRGEAPDENSPEAIKAREKEAERKARHQRSKRIAAQRKAAEEPVEVPERSDVAADIEVPAPPFWGSRIVKGLAVADYTGLLDERALFLGQWGLRGQRGGEGPSYEDLVETEGRPRLRYWLDRLSTDGILAHAAVVYGYFPAVSEGNDIVVLTEPKPDAPVRYRFHFPRQQRGRFLCIADFIRSRELAAERGEVDVLPFQLVTMGQPIADFANELFASNAYRDYLEVHGIGVQLTEALAEYWHRRIREELKFSGDRAMAAEDPEAKEDYFKLGYRGARFAFGYGACPDLEDRAKMMALLEPERIGVTLSEELQLHPEQSTDAFVLHHPEAKYFNV</sequence>
<comment type="function">
    <text evidence="1">Catalyzes the transfer of a methyl group from methyl-cobalamin to homocysteine, yielding enzyme-bound cob(I)alamin and methionine. Subsequently, remethylates the cofactor using methyltetrahydrofolate (By similarity).</text>
</comment>
<comment type="catalytic activity">
    <reaction>
        <text>(6S)-5-methyl-5,6,7,8-tetrahydrofolate + L-homocysteine = (6S)-5,6,7,8-tetrahydrofolate + L-methionine</text>
        <dbReference type="Rhea" id="RHEA:11172"/>
        <dbReference type="ChEBI" id="CHEBI:18608"/>
        <dbReference type="ChEBI" id="CHEBI:57453"/>
        <dbReference type="ChEBI" id="CHEBI:57844"/>
        <dbReference type="ChEBI" id="CHEBI:58199"/>
        <dbReference type="EC" id="2.1.1.13"/>
    </reaction>
</comment>
<comment type="cofactor">
    <cofactor evidence="1">
        <name>methylcob(III)alamin</name>
        <dbReference type="ChEBI" id="CHEBI:28115"/>
    </cofactor>
</comment>
<comment type="cofactor">
    <cofactor evidence="1">
        <name>Zn(2+)</name>
        <dbReference type="ChEBI" id="CHEBI:29105"/>
    </cofactor>
    <text evidence="1">Binds 1 zinc ion per subunit.</text>
</comment>
<comment type="pathway">
    <text>Amino-acid biosynthesis; L-methionine biosynthesis via de novo pathway; L-methionine from L-homocysteine (MetH route): step 1/1.</text>
</comment>
<comment type="domain">
    <text evidence="1">Modular enzyme with four functionally distinct domains. The isolated Hcy-binding domain catalyzes methyl transfer from free methylcobalamin to homocysteine. The Hcy-binding domain in association with the pterin-binding domain catalyzes the methylation of cob(I)alamin by methyltetrahydrofolate and the methylation of homocysteine. The B12-binding domain binds the cofactor. The AdoMet activation domain binds S-adenosyl-L-methionine. Under aerobic conditions cob(I)alamin can be converted to inactive cob(II)alamin. Reductive methylation by S-adenosyl-L-methionine and flavodoxin regenerates methylcobalamin (By similarity).</text>
</comment>
<comment type="miscellaneous">
    <text evidence="1">L-homocysteine is bound via the zinc atom.</text>
</comment>
<comment type="miscellaneous">
    <text>Was identified as a high-confidence drug target.</text>
</comment>
<comment type="similarity">
    <text evidence="9">Belongs to the vitamin-B12 dependent methionine synthase family.</text>
</comment>
<gene>
    <name type="primary">metH</name>
    <name type="ordered locus">Rv2124c</name>
    <name type="ORF">MTCY261.20c</name>
</gene>
<reference key="1">
    <citation type="journal article" date="1998" name="Nature">
        <title>Deciphering the biology of Mycobacterium tuberculosis from the complete genome sequence.</title>
        <authorList>
            <person name="Cole S.T."/>
            <person name="Brosch R."/>
            <person name="Parkhill J."/>
            <person name="Garnier T."/>
            <person name="Churcher C.M."/>
            <person name="Harris D.E."/>
            <person name="Gordon S.V."/>
            <person name="Eiglmeier K."/>
            <person name="Gas S."/>
            <person name="Barry C.E. III"/>
            <person name="Tekaia F."/>
            <person name="Badcock K."/>
            <person name="Basham D."/>
            <person name="Brown D."/>
            <person name="Chillingworth T."/>
            <person name="Connor R."/>
            <person name="Davies R.M."/>
            <person name="Devlin K."/>
            <person name="Feltwell T."/>
            <person name="Gentles S."/>
            <person name="Hamlin N."/>
            <person name="Holroyd S."/>
            <person name="Hornsby T."/>
            <person name="Jagels K."/>
            <person name="Krogh A."/>
            <person name="McLean J."/>
            <person name="Moule S."/>
            <person name="Murphy L.D."/>
            <person name="Oliver S."/>
            <person name="Osborne J."/>
            <person name="Quail M.A."/>
            <person name="Rajandream M.A."/>
            <person name="Rogers J."/>
            <person name="Rutter S."/>
            <person name="Seeger K."/>
            <person name="Skelton S."/>
            <person name="Squares S."/>
            <person name="Squares R."/>
            <person name="Sulston J.E."/>
            <person name="Taylor K."/>
            <person name="Whitehead S."/>
            <person name="Barrell B.G."/>
        </authorList>
    </citation>
    <scope>NUCLEOTIDE SEQUENCE [LARGE SCALE GENOMIC DNA]</scope>
    <source>
        <strain>ATCC 25618 / H37Rv</strain>
    </source>
</reference>
<reference key="2">
    <citation type="journal article" date="2008" name="BMC Syst. Biol.">
        <title>targetTB: a target identification pipeline for Mycobacterium tuberculosis through an interactome, reactome and genome-scale structural analysis.</title>
        <authorList>
            <person name="Raman K."/>
            <person name="Yeturu K."/>
            <person name="Chandra N."/>
        </authorList>
    </citation>
    <scope>IDENTIFICATION AS A DRUG TARGET [LARGE SCALE ANALYSIS]</scope>
</reference>
<reference key="3">
    <citation type="journal article" date="2011" name="Mol. Cell. Proteomics">
        <title>Proteogenomic analysis of Mycobacterium tuberculosis by high resolution mass spectrometry.</title>
        <authorList>
            <person name="Kelkar D.S."/>
            <person name="Kumar D."/>
            <person name="Kumar P."/>
            <person name="Balakrishnan L."/>
            <person name="Muthusamy B."/>
            <person name="Yadav A.K."/>
            <person name="Shrivastava P."/>
            <person name="Marimuthu A."/>
            <person name="Anand S."/>
            <person name="Sundaram H."/>
            <person name="Kingsbury R."/>
            <person name="Harsha H.C."/>
            <person name="Nair B."/>
            <person name="Prasad T.S."/>
            <person name="Chauhan D.S."/>
            <person name="Katoch K."/>
            <person name="Katoch V.M."/>
            <person name="Kumar P."/>
            <person name="Chaerkady R."/>
            <person name="Ramachandran S."/>
            <person name="Dash D."/>
            <person name="Pandey A."/>
        </authorList>
    </citation>
    <scope>IDENTIFICATION BY MASS SPECTROMETRY [LARGE SCALE ANALYSIS]</scope>
    <source>
        <strain>ATCC 25618 / H37Rv</strain>
    </source>
</reference>
<name>METH_MYCTU</name>
<accession>O33259</accession>
<accession>L0T8Q3</accession>
<protein>
    <recommendedName>
        <fullName>Methionine synthase</fullName>
        <ecNumber>2.1.1.13</ecNumber>
    </recommendedName>
    <alternativeName>
        <fullName>5-methyltetrahydrofolate--homocysteine methyltransferase</fullName>
    </alternativeName>
    <alternativeName>
        <fullName>Methionine synthase, vitamin-B12 dependent</fullName>
        <shortName>MS</shortName>
    </alternativeName>
</protein>
<proteinExistence type="evidence at protein level"/>
<feature type="chain" id="PRO_0000204534" description="Methionine synthase">
    <location>
        <begin position="1"/>
        <end position="1192"/>
    </location>
</feature>
<feature type="domain" description="Hcy-binding" evidence="3">
    <location>
        <begin position="1"/>
        <end position="312"/>
    </location>
</feature>
<feature type="domain" description="Pterin-binding" evidence="4">
    <location>
        <begin position="343"/>
        <end position="601"/>
    </location>
</feature>
<feature type="domain" description="B12-binding N-terminal" evidence="7">
    <location>
        <begin position="635"/>
        <end position="728"/>
    </location>
</feature>
<feature type="domain" description="B12-binding" evidence="6">
    <location>
        <begin position="729"/>
        <end position="866"/>
    </location>
</feature>
<feature type="domain" description="AdoMet activation" evidence="5">
    <location>
        <begin position="893"/>
        <end position="1192"/>
    </location>
</feature>
<feature type="region of interest" description="Disordered" evidence="8">
    <location>
        <begin position="860"/>
        <end position="904"/>
    </location>
</feature>
<feature type="compositionally biased region" description="Basic and acidic residues" evidence="8">
    <location>
        <begin position="872"/>
        <end position="881"/>
    </location>
</feature>
<feature type="compositionally biased region" description="Basic residues" evidence="8">
    <location>
        <begin position="882"/>
        <end position="893"/>
    </location>
</feature>
<feature type="binding site" evidence="3">
    <location>
        <position position="231"/>
    </location>
    <ligand>
        <name>Zn(2+)</name>
        <dbReference type="ChEBI" id="CHEBI:29105"/>
    </ligand>
</feature>
<feature type="binding site" evidence="3">
    <location>
        <position position="297"/>
    </location>
    <ligand>
        <name>Zn(2+)</name>
        <dbReference type="ChEBI" id="CHEBI:29105"/>
    </ligand>
</feature>
<feature type="binding site" evidence="3">
    <location>
        <position position="298"/>
    </location>
    <ligand>
        <name>Zn(2+)</name>
        <dbReference type="ChEBI" id="CHEBI:29105"/>
    </ligand>
</feature>
<feature type="binding site" evidence="2">
    <location>
        <begin position="739"/>
        <end position="743"/>
    </location>
    <ligand>
        <name>methylcob(III)alamin</name>
        <dbReference type="ChEBI" id="CHEBI:28115"/>
    </ligand>
</feature>
<feature type="binding site" description="axial binding residue" evidence="2">
    <location>
        <position position="742"/>
    </location>
    <ligand>
        <name>methylcob(III)alamin</name>
        <dbReference type="ChEBI" id="CHEBI:28115"/>
    </ligand>
    <ligandPart>
        <name>Co</name>
        <dbReference type="ChEBI" id="CHEBI:27638"/>
    </ligandPart>
</feature>
<feature type="binding site" evidence="2">
    <location>
        <position position="787"/>
    </location>
    <ligand>
        <name>methylcob(III)alamin</name>
        <dbReference type="ChEBI" id="CHEBI:28115"/>
    </ligand>
</feature>
<feature type="binding site" evidence="2">
    <location>
        <position position="845"/>
    </location>
    <ligand>
        <name>methylcob(III)alamin</name>
        <dbReference type="ChEBI" id="CHEBI:28115"/>
    </ligand>
</feature>
<feature type="binding site" evidence="1">
    <location>
        <position position="940"/>
    </location>
    <ligand>
        <name>S-adenosyl-L-methionine</name>
        <dbReference type="ChEBI" id="CHEBI:59789"/>
    </ligand>
</feature>
<feature type="binding site" evidence="1">
    <location>
        <position position="1135"/>
    </location>
    <ligand>
        <name>S-adenosyl-L-methionine</name>
        <dbReference type="ChEBI" id="CHEBI:59789"/>
    </ligand>
</feature>
<feature type="binding site" evidence="1">
    <location>
        <begin position="1189"/>
        <end position="1190"/>
    </location>
    <ligand>
        <name>S-adenosyl-L-methionine</name>
        <dbReference type="ChEBI" id="CHEBI:59789"/>
    </ligand>
</feature>